<accession>Q5XEB4</accession>
<accession>P82549</accession>
<proteinExistence type="evidence at protein level"/>
<reference key="1">
    <citation type="journal article" date="2004" name="J. Infect. Dis.">
        <title>Progress toward characterization of the group A Streptococcus metagenome: complete genome sequence of a macrolide-resistant serotype M6 strain.</title>
        <authorList>
            <person name="Banks D.J."/>
            <person name="Porcella S.F."/>
            <person name="Barbian K.D."/>
            <person name="Beres S.B."/>
            <person name="Philips L.E."/>
            <person name="Voyich J.M."/>
            <person name="DeLeo F.R."/>
            <person name="Martin J.M."/>
            <person name="Somerville G.A."/>
            <person name="Musser J.M."/>
        </authorList>
    </citation>
    <scope>NUCLEOTIDE SEQUENCE [LARGE SCALE GENOMIC DNA]</scope>
    <source>
        <strain>ATCC BAA-946 / MGAS10394</strain>
    </source>
</reference>
<reference key="2">
    <citation type="submission" date="2000-05" db="UniProtKB">
        <title>Two-dimensional gel electrophoresis map of Streptococcus pyogenes proteins.</title>
        <authorList>
            <person name="Hogan D.A."/>
            <person name="Du P."/>
            <person name="Stevenson T.I."/>
            <person name="Whitton M."/>
            <person name="Kilby G.W."/>
            <person name="Rogers J."/>
            <person name="VanBogelen R.A."/>
        </authorList>
    </citation>
    <scope>PROTEIN SEQUENCE OF 1-13 AND 207-212</scope>
    <scope>MASS SPECTROMETRY</scope>
    <source>
        <strain>JRS4 / Serotype M6</strain>
    </source>
</reference>
<dbReference type="EC" id="2.7.4.3" evidence="1"/>
<dbReference type="EMBL" id="CP000003">
    <property type="protein sequence ID" value="AAT86249.1"/>
    <property type="molecule type" value="Genomic_DNA"/>
</dbReference>
<dbReference type="RefSeq" id="WP_011184079.1">
    <property type="nucleotide sequence ID" value="NC_006086.1"/>
</dbReference>
<dbReference type="SMR" id="Q5XEB4"/>
<dbReference type="KEGG" id="spa:M6_Spy0114"/>
<dbReference type="HOGENOM" id="CLU_032354_1_2_9"/>
<dbReference type="UniPathway" id="UPA00588">
    <property type="reaction ID" value="UER00649"/>
</dbReference>
<dbReference type="Proteomes" id="UP000001167">
    <property type="component" value="Chromosome"/>
</dbReference>
<dbReference type="GO" id="GO:0005737">
    <property type="term" value="C:cytoplasm"/>
    <property type="evidence" value="ECO:0007669"/>
    <property type="project" value="UniProtKB-SubCell"/>
</dbReference>
<dbReference type="GO" id="GO:0004017">
    <property type="term" value="F:adenylate kinase activity"/>
    <property type="evidence" value="ECO:0007669"/>
    <property type="project" value="UniProtKB-UniRule"/>
</dbReference>
<dbReference type="GO" id="GO:0005524">
    <property type="term" value="F:ATP binding"/>
    <property type="evidence" value="ECO:0007669"/>
    <property type="project" value="UniProtKB-UniRule"/>
</dbReference>
<dbReference type="GO" id="GO:0044209">
    <property type="term" value="P:AMP salvage"/>
    <property type="evidence" value="ECO:0007669"/>
    <property type="project" value="UniProtKB-UniRule"/>
</dbReference>
<dbReference type="CDD" id="cd01428">
    <property type="entry name" value="ADK"/>
    <property type="match status" value="1"/>
</dbReference>
<dbReference type="FunFam" id="3.40.50.300:FF:000106">
    <property type="entry name" value="Adenylate kinase mitochondrial"/>
    <property type="match status" value="1"/>
</dbReference>
<dbReference type="Gene3D" id="3.40.50.300">
    <property type="entry name" value="P-loop containing nucleotide triphosphate hydrolases"/>
    <property type="match status" value="1"/>
</dbReference>
<dbReference type="HAMAP" id="MF_00235">
    <property type="entry name" value="Adenylate_kinase_Adk"/>
    <property type="match status" value="1"/>
</dbReference>
<dbReference type="InterPro" id="IPR006259">
    <property type="entry name" value="Adenyl_kin_sub"/>
</dbReference>
<dbReference type="InterPro" id="IPR000850">
    <property type="entry name" value="Adenylat/UMP-CMP_kin"/>
</dbReference>
<dbReference type="InterPro" id="IPR033690">
    <property type="entry name" value="Adenylat_kinase_CS"/>
</dbReference>
<dbReference type="InterPro" id="IPR027417">
    <property type="entry name" value="P-loop_NTPase"/>
</dbReference>
<dbReference type="NCBIfam" id="TIGR01351">
    <property type="entry name" value="adk"/>
    <property type="match status" value="1"/>
</dbReference>
<dbReference type="NCBIfam" id="NF001380">
    <property type="entry name" value="PRK00279.1-2"/>
    <property type="match status" value="1"/>
</dbReference>
<dbReference type="NCBIfam" id="NF001381">
    <property type="entry name" value="PRK00279.1-3"/>
    <property type="match status" value="1"/>
</dbReference>
<dbReference type="NCBIfam" id="NF001382">
    <property type="entry name" value="PRK00279.1-4"/>
    <property type="match status" value="1"/>
</dbReference>
<dbReference type="PANTHER" id="PTHR23359">
    <property type="entry name" value="NUCLEOTIDE KINASE"/>
    <property type="match status" value="1"/>
</dbReference>
<dbReference type="Pfam" id="PF00406">
    <property type="entry name" value="ADK"/>
    <property type="match status" value="1"/>
</dbReference>
<dbReference type="PRINTS" id="PR00094">
    <property type="entry name" value="ADENYLTKNASE"/>
</dbReference>
<dbReference type="SUPFAM" id="SSF52540">
    <property type="entry name" value="P-loop containing nucleoside triphosphate hydrolases"/>
    <property type="match status" value="1"/>
</dbReference>
<dbReference type="PROSITE" id="PS00113">
    <property type="entry name" value="ADENYLATE_KINASE"/>
    <property type="match status" value="1"/>
</dbReference>
<evidence type="ECO:0000255" key="1">
    <source>
        <dbReference type="HAMAP-Rule" id="MF_00235"/>
    </source>
</evidence>
<evidence type="ECO:0000269" key="2">
    <source ref="2"/>
</evidence>
<gene>
    <name evidence="1" type="primary">adk</name>
    <name type="ordered locus">M6_Spy0114</name>
</gene>
<protein>
    <recommendedName>
        <fullName evidence="1">Adenylate kinase</fullName>
        <shortName evidence="1">AK</shortName>
        <ecNumber evidence="1">2.7.4.3</ecNumber>
    </recommendedName>
    <alternativeName>
        <fullName evidence="1">ATP-AMP transphosphorylase</fullName>
    </alternativeName>
    <alternativeName>
        <fullName evidence="1">ATP:AMP phosphotransferase</fullName>
    </alternativeName>
    <alternativeName>
        <fullName evidence="1">Adenylate monophosphate kinase</fullName>
    </alternativeName>
</protein>
<keyword id="KW-0067">ATP-binding</keyword>
<keyword id="KW-0963">Cytoplasm</keyword>
<keyword id="KW-0903">Direct protein sequencing</keyword>
<keyword id="KW-0418">Kinase</keyword>
<keyword id="KW-0545">Nucleotide biosynthesis</keyword>
<keyword id="KW-0547">Nucleotide-binding</keyword>
<keyword id="KW-0808">Transferase</keyword>
<sequence length="212" mass="23816">MNLLIMGLPGAGKGTQAAKIVEEFGVAHISTGDMFRAAMANQTEMGRLAKSYIDKGELVPDEVTNGIVKERLAEDDIAEKGFLLDGYPRTIEQAHALDATLEELGLRLDGVINIKVDPSCLVERLSGRIINRKTGETFHKVFNPPVDYKEEDYYQREDDKPETVKRRLDVNMAQEEPILEHYRKLDLVTDIEGNQEITDVFADVEKALLELK</sequence>
<feature type="chain" id="PRO_0000158864" description="Adenylate kinase">
    <location>
        <begin position="1"/>
        <end position="212"/>
    </location>
</feature>
<feature type="region of interest" description="NMP" evidence="1">
    <location>
        <begin position="30"/>
        <end position="59"/>
    </location>
</feature>
<feature type="region of interest" description="LID" evidence="1">
    <location>
        <begin position="127"/>
        <end position="159"/>
    </location>
</feature>
<feature type="binding site" evidence="1">
    <location>
        <begin position="10"/>
        <end position="15"/>
    </location>
    <ligand>
        <name>ATP</name>
        <dbReference type="ChEBI" id="CHEBI:30616"/>
    </ligand>
</feature>
<feature type="binding site" evidence="1">
    <location>
        <position position="31"/>
    </location>
    <ligand>
        <name>AMP</name>
        <dbReference type="ChEBI" id="CHEBI:456215"/>
    </ligand>
</feature>
<feature type="binding site" evidence="1">
    <location>
        <position position="36"/>
    </location>
    <ligand>
        <name>AMP</name>
        <dbReference type="ChEBI" id="CHEBI:456215"/>
    </ligand>
</feature>
<feature type="binding site" evidence="1">
    <location>
        <begin position="57"/>
        <end position="59"/>
    </location>
    <ligand>
        <name>AMP</name>
        <dbReference type="ChEBI" id="CHEBI:456215"/>
    </ligand>
</feature>
<feature type="binding site" evidence="1">
    <location>
        <begin position="86"/>
        <end position="89"/>
    </location>
    <ligand>
        <name>AMP</name>
        <dbReference type="ChEBI" id="CHEBI:456215"/>
    </ligand>
</feature>
<feature type="binding site" evidence="1">
    <location>
        <position position="93"/>
    </location>
    <ligand>
        <name>AMP</name>
        <dbReference type="ChEBI" id="CHEBI:456215"/>
    </ligand>
</feature>
<feature type="binding site" evidence="1">
    <location>
        <position position="128"/>
    </location>
    <ligand>
        <name>ATP</name>
        <dbReference type="ChEBI" id="CHEBI:30616"/>
    </ligand>
</feature>
<feature type="binding site" evidence="1">
    <location>
        <begin position="137"/>
        <end position="138"/>
    </location>
    <ligand>
        <name>ATP</name>
        <dbReference type="ChEBI" id="CHEBI:30616"/>
    </ligand>
</feature>
<feature type="binding site" evidence="1">
    <location>
        <position position="156"/>
    </location>
    <ligand>
        <name>AMP</name>
        <dbReference type="ChEBI" id="CHEBI:456215"/>
    </ligand>
</feature>
<feature type="binding site" evidence="1">
    <location>
        <position position="167"/>
    </location>
    <ligand>
        <name>AMP</name>
        <dbReference type="ChEBI" id="CHEBI:456215"/>
    </ligand>
</feature>
<feature type="binding site" evidence="1">
    <location>
        <position position="195"/>
    </location>
    <ligand>
        <name>ATP</name>
        <dbReference type="ChEBI" id="CHEBI:30616"/>
    </ligand>
</feature>
<organism>
    <name type="scientific">Streptococcus pyogenes serotype M6 (strain ATCC BAA-946 / MGAS10394)</name>
    <dbReference type="NCBI Taxonomy" id="286636"/>
    <lineage>
        <taxon>Bacteria</taxon>
        <taxon>Bacillati</taxon>
        <taxon>Bacillota</taxon>
        <taxon>Bacilli</taxon>
        <taxon>Lactobacillales</taxon>
        <taxon>Streptococcaceae</taxon>
        <taxon>Streptococcus</taxon>
    </lineage>
</organism>
<comment type="function">
    <text evidence="1">Catalyzes the reversible transfer of the terminal phosphate group between ATP and AMP. Plays an important role in cellular energy homeostasis and in adenine nucleotide metabolism.</text>
</comment>
<comment type="catalytic activity">
    <reaction evidence="1">
        <text>AMP + ATP = 2 ADP</text>
        <dbReference type="Rhea" id="RHEA:12973"/>
        <dbReference type="ChEBI" id="CHEBI:30616"/>
        <dbReference type="ChEBI" id="CHEBI:456215"/>
        <dbReference type="ChEBI" id="CHEBI:456216"/>
        <dbReference type="EC" id="2.7.4.3"/>
    </reaction>
</comment>
<comment type="pathway">
    <text evidence="1">Purine metabolism; AMP biosynthesis via salvage pathway; AMP from ADP: step 1/1.</text>
</comment>
<comment type="subunit">
    <text evidence="1">Monomer.</text>
</comment>
<comment type="subcellular location">
    <subcellularLocation>
        <location evidence="1">Cytoplasm</location>
    </subcellularLocation>
</comment>
<comment type="domain">
    <text evidence="1">Consists of three domains, a large central CORE domain and two small peripheral domains, NMPbind and LID, which undergo movements during catalysis. The LID domain closes over the site of phosphoryl transfer upon ATP binding. Assembling and dissambling the active center during each catalytic cycle provides an effective means to prevent ATP hydrolysis.</text>
</comment>
<comment type="mass spectrometry" mass="23699.98" method="Electrospray" evidence="2"/>
<comment type="similarity">
    <text evidence="1">Belongs to the adenylate kinase family.</text>
</comment>
<name>KAD_STRP6</name>